<name>ZN570_HUMAN</name>
<organism>
    <name type="scientific">Homo sapiens</name>
    <name type="common">Human</name>
    <dbReference type="NCBI Taxonomy" id="9606"/>
    <lineage>
        <taxon>Eukaryota</taxon>
        <taxon>Metazoa</taxon>
        <taxon>Chordata</taxon>
        <taxon>Craniata</taxon>
        <taxon>Vertebrata</taxon>
        <taxon>Euteleostomi</taxon>
        <taxon>Mammalia</taxon>
        <taxon>Eutheria</taxon>
        <taxon>Euarchontoglires</taxon>
        <taxon>Primates</taxon>
        <taxon>Haplorrhini</taxon>
        <taxon>Catarrhini</taxon>
        <taxon>Hominidae</taxon>
        <taxon>Homo</taxon>
    </lineage>
</organism>
<gene>
    <name type="primary">ZNF570</name>
</gene>
<accession>Q96NI8</accession>
<accession>A1L472</accession>
<accession>B4DMP1</accession>
<evidence type="ECO:0000255" key="1">
    <source>
        <dbReference type="PROSITE-ProRule" id="PRU00042"/>
    </source>
</evidence>
<evidence type="ECO:0000255" key="2">
    <source>
        <dbReference type="PROSITE-ProRule" id="PRU00119"/>
    </source>
</evidence>
<evidence type="ECO:0000303" key="3">
    <source>
    </source>
</evidence>
<evidence type="ECO:0000305" key="4"/>
<proteinExistence type="evidence at protein level"/>
<sequence length="536" mass="62330">MAVGLLKAMYQELVTFRDVAVDFSQEEWDCLDSSQRHLYSNVMLENYRILVSLGLCFSKPSVILLLEQGKAPWMVKRELTKGLCSGWEPICETEELTPKQDFYEEHQSQKIIETLTSYNLEYSSLREEWKCEGYFERQPGNQKACFKEEIITHEEPLFDEREQEYKSWGSFHQNPLLCTQKIIPKEEKVHKHDTQKRSFKKNLMAIKPKSVCAEKKLLKCNDCEKVFSQSSSLTLHQRIHTGEKPYKCIECGKAFSQRSNLVQHQRIHTGEKPYECKECRKAFSQNAHLVQHLRVHTGEKPYECKVCRKAFSQFAYLAQHQRVHTGEKPYECIECGKAFSNRSSIAQHQRVHTGEKPYECNVCGKAFSLRAYLTVHQRIHTGERPYECKECGKAFSQNSHLAQHQRIHTGEKPYKCQECRKAFSQIAYLAQHQRVHTGEKPYECIECGKAFSNDSSLTQHQRVHTGEKPYECTVCGKAFSYCGSLAQHQRIHTGERPYECKECKKTFRQHAHLAHHQRIHIGESLSPPNPVNHQVL</sequence>
<feature type="chain" id="PRO_0000047661" description="Zinc finger protein 570">
    <location>
        <begin position="1"/>
        <end position="536"/>
    </location>
</feature>
<feature type="domain" description="KRAB" evidence="2">
    <location>
        <begin position="14"/>
        <end position="85"/>
    </location>
</feature>
<feature type="zinc finger region" description="C2H2-type 1" evidence="1">
    <location>
        <begin position="218"/>
        <end position="240"/>
    </location>
</feature>
<feature type="zinc finger region" description="C2H2-type 2" evidence="1">
    <location>
        <begin position="246"/>
        <end position="268"/>
    </location>
</feature>
<feature type="zinc finger region" description="C2H2-type 3" evidence="1">
    <location>
        <begin position="274"/>
        <end position="296"/>
    </location>
</feature>
<feature type="zinc finger region" description="C2H2-type 4" evidence="1">
    <location>
        <begin position="302"/>
        <end position="324"/>
    </location>
</feature>
<feature type="zinc finger region" description="C2H2-type 5" evidence="1">
    <location>
        <begin position="330"/>
        <end position="352"/>
    </location>
</feature>
<feature type="zinc finger region" description="C2H2-type 6" evidence="1">
    <location>
        <begin position="358"/>
        <end position="380"/>
    </location>
</feature>
<feature type="zinc finger region" description="C2H2-type 7" evidence="1">
    <location>
        <begin position="386"/>
        <end position="408"/>
    </location>
</feature>
<feature type="zinc finger region" description="C2H2-type 8" evidence="1">
    <location>
        <begin position="414"/>
        <end position="436"/>
    </location>
</feature>
<feature type="zinc finger region" description="C2H2-type 9" evidence="1">
    <location>
        <begin position="442"/>
        <end position="464"/>
    </location>
</feature>
<feature type="zinc finger region" description="C2H2-type 10" evidence="1">
    <location>
        <begin position="470"/>
        <end position="492"/>
    </location>
</feature>
<feature type="zinc finger region" description="C2H2-type 11" evidence="1">
    <location>
        <begin position="498"/>
        <end position="520"/>
    </location>
</feature>
<feature type="splice variant" id="VSP_055967" description="In isoform 2." evidence="3">
    <location>
        <begin position="1"/>
        <end position="203"/>
    </location>
</feature>
<dbReference type="EMBL" id="AK055353">
    <property type="protein sequence ID" value="BAB70908.1"/>
    <property type="molecule type" value="mRNA"/>
</dbReference>
<dbReference type="EMBL" id="AK297561">
    <property type="protein sequence ID" value="BAG59953.1"/>
    <property type="molecule type" value="mRNA"/>
</dbReference>
<dbReference type="EMBL" id="AC008806">
    <property type="status" value="NOT_ANNOTATED_CDS"/>
    <property type="molecule type" value="Genomic_DNA"/>
</dbReference>
<dbReference type="EMBL" id="CH471126">
    <property type="protein sequence ID" value="EAW56732.1"/>
    <property type="molecule type" value="Genomic_DNA"/>
</dbReference>
<dbReference type="EMBL" id="BC130425">
    <property type="protein sequence ID" value="AAI30426.1"/>
    <property type="molecule type" value="mRNA"/>
</dbReference>
<dbReference type="EMBL" id="BC130433">
    <property type="protein sequence ID" value="AAI30434.1"/>
    <property type="molecule type" value="mRNA"/>
</dbReference>
<dbReference type="CCDS" id="CCDS12504.1">
    <molecule id="Q96NI8-1"/>
</dbReference>
<dbReference type="RefSeq" id="NP_001308920.1">
    <molecule id="Q96NI8-1"/>
    <property type="nucleotide sequence ID" value="NM_001321991.3"/>
</dbReference>
<dbReference type="RefSeq" id="NP_001308921.1">
    <property type="nucleotide sequence ID" value="NM_001321992.1"/>
</dbReference>
<dbReference type="RefSeq" id="NP_001308922.1">
    <molecule id="Q96NI8-2"/>
    <property type="nucleotide sequence ID" value="NM_001321993.3"/>
</dbReference>
<dbReference type="RefSeq" id="NP_001308923.1">
    <molecule id="Q96NI8-2"/>
    <property type="nucleotide sequence ID" value="NM_001321994.3"/>
</dbReference>
<dbReference type="RefSeq" id="NP_653295.1">
    <molecule id="Q96NI8-1"/>
    <property type="nucleotide sequence ID" value="NM_144694.5"/>
</dbReference>
<dbReference type="RefSeq" id="XP_011524846.1">
    <property type="nucleotide sequence ID" value="XM_011526544.2"/>
</dbReference>
<dbReference type="SMR" id="Q96NI8"/>
<dbReference type="BioGRID" id="127138">
    <property type="interactions" value="2"/>
</dbReference>
<dbReference type="FunCoup" id="Q96NI8">
    <property type="interactions" value="117"/>
</dbReference>
<dbReference type="STRING" id="9606.ENSP00000467218"/>
<dbReference type="iPTMnet" id="Q96NI8"/>
<dbReference type="PhosphoSitePlus" id="Q96NI8"/>
<dbReference type="BioMuta" id="ZNF570"/>
<dbReference type="DMDM" id="74762681"/>
<dbReference type="jPOST" id="Q96NI8"/>
<dbReference type="MassIVE" id="Q96NI8"/>
<dbReference type="PaxDb" id="9606-ENSP00000467218"/>
<dbReference type="PeptideAtlas" id="Q96NI8"/>
<dbReference type="ProteomicsDB" id="4629"/>
<dbReference type="ProteomicsDB" id="77518">
    <molecule id="Q96NI8-1"/>
</dbReference>
<dbReference type="Antibodypedia" id="16379">
    <property type="antibodies" value="102 antibodies from 18 providers"/>
</dbReference>
<dbReference type="DNASU" id="148268"/>
<dbReference type="Ensembl" id="ENST00000330173.6">
    <molecule id="Q96NI8-1"/>
    <property type="protein sequence ID" value="ENSP00000331540.1"/>
    <property type="gene ID" value="ENSG00000171827.11"/>
</dbReference>
<dbReference type="GeneID" id="148268"/>
<dbReference type="KEGG" id="hsa:148268"/>
<dbReference type="MANE-Select" id="ENST00000330173.6">
    <property type="protein sequence ID" value="ENSP00000331540.1"/>
    <property type="RefSeq nucleotide sequence ID" value="NM_144694.5"/>
    <property type="RefSeq protein sequence ID" value="NP_653295.1"/>
</dbReference>
<dbReference type="UCSC" id="uc002ogk.2">
    <molecule id="Q96NI8-1"/>
    <property type="organism name" value="human"/>
</dbReference>
<dbReference type="AGR" id="HGNC:26416"/>
<dbReference type="CTD" id="148268"/>
<dbReference type="GeneCards" id="ZNF570"/>
<dbReference type="HGNC" id="HGNC:26416">
    <property type="gene designation" value="ZNF570"/>
</dbReference>
<dbReference type="HPA" id="ENSG00000171827">
    <property type="expression patterns" value="Low tissue specificity"/>
</dbReference>
<dbReference type="neXtProt" id="NX_Q96NI8"/>
<dbReference type="OpenTargets" id="ENSG00000171827"/>
<dbReference type="PharmGKB" id="PA134943423"/>
<dbReference type="VEuPathDB" id="HostDB:ENSG00000171827"/>
<dbReference type="eggNOG" id="KOG1721">
    <property type="taxonomic scope" value="Eukaryota"/>
</dbReference>
<dbReference type="GeneTree" id="ENSGT00940000160177"/>
<dbReference type="HOGENOM" id="CLU_002678_44_5_1"/>
<dbReference type="InParanoid" id="Q96NI8"/>
<dbReference type="OrthoDB" id="427030at2759"/>
<dbReference type="PAN-GO" id="Q96NI8">
    <property type="GO annotations" value="4 GO annotations based on evolutionary models"/>
</dbReference>
<dbReference type="PhylomeDB" id="Q96NI8"/>
<dbReference type="TreeFam" id="TF341817"/>
<dbReference type="PathwayCommons" id="Q96NI8"/>
<dbReference type="Reactome" id="R-HSA-212436">
    <property type="pathway name" value="Generic Transcription Pathway"/>
</dbReference>
<dbReference type="BioGRID-ORCS" id="148268">
    <property type="hits" value="14 hits in 1165 CRISPR screens"/>
</dbReference>
<dbReference type="ChiTaRS" id="ZNF570">
    <property type="organism name" value="human"/>
</dbReference>
<dbReference type="GenomeRNAi" id="148268"/>
<dbReference type="Pharos" id="Q96NI8">
    <property type="development level" value="Tdark"/>
</dbReference>
<dbReference type="PRO" id="PR:Q96NI8"/>
<dbReference type="Proteomes" id="UP000005640">
    <property type="component" value="Chromosome 19"/>
</dbReference>
<dbReference type="RNAct" id="Q96NI8">
    <property type="molecule type" value="protein"/>
</dbReference>
<dbReference type="Bgee" id="ENSG00000171827">
    <property type="expression patterns" value="Expressed in sperm and 179 other cell types or tissues"/>
</dbReference>
<dbReference type="ExpressionAtlas" id="Q96NI8">
    <property type="expression patterns" value="baseline and differential"/>
</dbReference>
<dbReference type="GO" id="GO:0005634">
    <property type="term" value="C:nucleus"/>
    <property type="evidence" value="ECO:0000318"/>
    <property type="project" value="GO_Central"/>
</dbReference>
<dbReference type="GO" id="GO:0000981">
    <property type="term" value="F:DNA-binding transcription factor activity, RNA polymerase II-specific"/>
    <property type="evidence" value="ECO:0000318"/>
    <property type="project" value="GO_Central"/>
</dbReference>
<dbReference type="GO" id="GO:0000978">
    <property type="term" value="F:RNA polymerase II cis-regulatory region sequence-specific DNA binding"/>
    <property type="evidence" value="ECO:0000318"/>
    <property type="project" value="GO_Central"/>
</dbReference>
<dbReference type="GO" id="GO:0008270">
    <property type="term" value="F:zinc ion binding"/>
    <property type="evidence" value="ECO:0007669"/>
    <property type="project" value="UniProtKB-KW"/>
</dbReference>
<dbReference type="GO" id="GO:0006357">
    <property type="term" value="P:regulation of transcription by RNA polymerase II"/>
    <property type="evidence" value="ECO:0000318"/>
    <property type="project" value="GO_Central"/>
</dbReference>
<dbReference type="CDD" id="cd07765">
    <property type="entry name" value="KRAB_A-box"/>
    <property type="match status" value="1"/>
</dbReference>
<dbReference type="FunFam" id="3.30.160.60:FF:000944">
    <property type="entry name" value="zinc finger protein 232 isoform X1"/>
    <property type="match status" value="1"/>
</dbReference>
<dbReference type="FunFam" id="3.30.160.60:FF:001255">
    <property type="entry name" value="Zinc finger protein 26"/>
    <property type="match status" value="1"/>
</dbReference>
<dbReference type="FunFam" id="3.30.160.60:FF:002343">
    <property type="entry name" value="Zinc finger protein 33A"/>
    <property type="match status" value="1"/>
</dbReference>
<dbReference type="FunFam" id="3.30.160.60:FF:001498">
    <property type="entry name" value="Zinc finger protein 404"/>
    <property type="match status" value="1"/>
</dbReference>
<dbReference type="FunFam" id="3.30.160.60:FF:000238">
    <property type="entry name" value="Zinc finger protein 485"/>
    <property type="match status" value="1"/>
</dbReference>
<dbReference type="FunFam" id="3.30.160.60:FF:002254">
    <property type="entry name" value="Zinc finger protein 540"/>
    <property type="match status" value="2"/>
</dbReference>
<dbReference type="FunFam" id="3.30.160.60:FF:000826">
    <property type="entry name" value="Zinc finger protein 570"/>
    <property type="match status" value="2"/>
</dbReference>
<dbReference type="FunFam" id="3.30.160.60:FF:002071">
    <property type="entry name" value="Zinc finger protein 570"/>
    <property type="match status" value="1"/>
</dbReference>
<dbReference type="FunFam" id="3.30.160.60:FF:001270">
    <property type="entry name" value="zinc finger protein 583 isoform X1"/>
    <property type="match status" value="1"/>
</dbReference>
<dbReference type="Gene3D" id="6.10.140.140">
    <property type="match status" value="1"/>
</dbReference>
<dbReference type="Gene3D" id="3.30.160.60">
    <property type="entry name" value="Classic Zinc Finger"/>
    <property type="match status" value="11"/>
</dbReference>
<dbReference type="InterPro" id="IPR001909">
    <property type="entry name" value="KRAB"/>
</dbReference>
<dbReference type="InterPro" id="IPR036051">
    <property type="entry name" value="KRAB_dom_sf"/>
</dbReference>
<dbReference type="InterPro" id="IPR036236">
    <property type="entry name" value="Znf_C2H2_sf"/>
</dbReference>
<dbReference type="InterPro" id="IPR013087">
    <property type="entry name" value="Znf_C2H2_type"/>
</dbReference>
<dbReference type="PANTHER" id="PTHR14003">
    <property type="entry name" value="TRANSCRIPTIONAL REPRESSOR PROTEIN YY"/>
    <property type="match status" value="1"/>
</dbReference>
<dbReference type="PANTHER" id="PTHR14003:SF23">
    <property type="entry name" value="ZINC FINGER PROTEIN 143"/>
    <property type="match status" value="1"/>
</dbReference>
<dbReference type="Pfam" id="PF01352">
    <property type="entry name" value="KRAB"/>
    <property type="match status" value="1"/>
</dbReference>
<dbReference type="Pfam" id="PF00096">
    <property type="entry name" value="zf-C2H2"/>
    <property type="match status" value="11"/>
</dbReference>
<dbReference type="SMART" id="SM00349">
    <property type="entry name" value="KRAB"/>
    <property type="match status" value="1"/>
</dbReference>
<dbReference type="SMART" id="SM00355">
    <property type="entry name" value="ZnF_C2H2"/>
    <property type="match status" value="11"/>
</dbReference>
<dbReference type="SUPFAM" id="SSF57667">
    <property type="entry name" value="beta-beta-alpha zinc fingers"/>
    <property type="match status" value="6"/>
</dbReference>
<dbReference type="SUPFAM" id="SSF109640">
    <property type="entry name" value="KRAB domain (Kruppel-associated box)"/>
    <property type="match status" value="1"/>
</dbReference>
<dbReference type="PROSITE" id="PS50805">
    <property type="entry name" value="KRAB"/>
    <property type="match status" value="1"/>
</dbReference>
<dbReference type="PROSITE" id="PS00028">
    <property type="entry name" value="ZINC_FINGER_C2H2_1"/>
    <property type="match status" value="11"/>
</dbReference>
<dbReference type="PROSITE" id="PS50157">
    <property type="entry name" value="ZINC_FINGER_C2H2_2"/>
    <property type="match status" value="11"/>
</dbReference>
<protein>
    <recommendedName>
        <fullName>Zinc finger protein 570</fullName>
    </recommendedName>
</protein>
<keyword id="KW-0025">Alternative splicing</keyword>
<keyword id="KW-0238">DNA-binding</keyword>
<keyword id="KW-0479">Metal-binding</keyword>
<keyword id="KW-0539">Nucleus</keyword>
<keyword id="KW-1267">Proteomics identification</keyword>
<keyword id="KW-1185">Reference proteome</keyword>
<keyword id="KW-0677">Repeat</keyword>
<keyword id="KW-0804">Transcription</keyword>
<keyword id="KW-0805">Transcription regulation</keyword>
<keyword id="KW-0862">Zinc</keyword>
<keyword id="KW-0863">Zinc-finger</keyword>
<comment type="function">
    <text>May be involved in transcriptional regulation.</text>
</comment>
<comment type="subcellular location">
    <subcellularLocation>
        <location evidence="4">Nucleus</location>
    </subcellularLocation>
</comment>
<comment type="alternative products">
    <event type="alternative splicing"/>
    <isoform>
        <id>Q96NI8-1</id>
        <name>1</name>
        <sequence type="displayed"/>
    </isoform>
    <isoform>
        <id>Q96NI8-2</id>
        <name>2</name>
        <sequence type="described" ref="VSP_055967"/>
    </isoform>
</comment>
<comment type="similarity">
    <text evidence="4">Belongs to the krueppel C2H2-type zinc-finger protein family.</text>
</comment>
<reference key="1">
    <citation type="journal article" date="2004" name="Nat. Genet.">
        <title>Complete sequencing and characterization of 21,243 full-length human cDNAs.</title>
        <authorList>
            <person name="Ota T."/>
            <person name="Suzuki Y."/>
            <person name="Nishikawa T."/>
            <person name="Otsuki T."/>
            <person name="Sugiyama T."/>
            <person name="Irie R."/>
            <person name="Wakamatsu A."/>
            <person name="Hayashi K."/>
            <person name="Sato H."/>
            <person name="Nagai K."/>
            <person name="Kimura K."/>
            <person name="Makita H."/>
            <person name="Sekine M."/>
            <person name="Obayashi M."/>
            <person name="Nishi T."/>
            <person name="Shibahara T."/>
            <person name="Tanaka T."/>
            <person name="Ishii S."/>
            <person name="Yamamoto J."/>
            <person name="Saito K."/>
            <person name="Kawai Y."/>
            <person name="Isono Y."/>
            <person name="Nakamura Y."/>
            <person name="Nagahari K."/>
            <person name="Murakami K."/>
            <person name="Yasuda T."/>
            <person name="Iwayanagi T."/>
            <person name="Wagatsuma M."/>
            <person name="Shiratori A."/>
            <person name="Sudo H."/>
            <person name="Hosoiri T."/>
            <person name="Kaku Y."/>
            <person name="Kodaira H."/>
            <person name="Kondo H."/>
            <person name="Sugawara M."/>
            <person name="Takahashi M."/>
            <person name="Kanda K."/>
            <person name="Yokoi T."/>
            <person name="Furuya T."/>
            <person name="Kikkawa E."/>
            <person name="Omura Y."/>
            <person name="Abe K."/>
            <person name="Kamihara K."/>
            <person name="Katsuta N."/>
            <person name="Sato K."/>
            <person name="Tanikawa M."/>
            <person name="Yamazaki M."/>
            <person name="Ninomiya K."/>
            <person name="Ishibashi T."/>
            <person name="Yamashita H."/>
            <person name="Murakawa K."/>
            <person name="Fujimori K."/>
            <person name="Tanai H."/>
            <person name="Kimata M."/>
            <person name="Watanabe M."/>
            <person name="Hiraoka S."/>
            <person name="Chiba Y."/>
            <person name="Ishida S."/>
            <person name="Ono Y."/>
            <person name="Takiguchi S."/>
            <person name="Watanabe S."/>
            <person name="Yosida M."/>
            <person name="Hotuta T."/>
            <person name="Kusano J."/>
            <person name="Kanehori K."/>
            <person name="Takahashi-Fujii A."/>
            <person name="Hara H."/>
            <person name="Tanase T.-O."/>
            <person name="Nomura Y."/>
            <person name="Togiya S."/>
            <person name="Komai F."/>
            <person name="Hara R."/>
            <person name="Takeuchi K."/>
            <person name="Arita M."/>
            <person name="Imose N."/>
            <person name="Musashino K."/>
            <person name="Yuuki H."/>
            <person name="Oshima A."/>
            <person name="Sasaki N."/>
            <person name="Aotsuka S."/>
            <person name="Yoshikawa Y."/>
            <person name="Matsunawa H."/>
            <person name="Ichihara T."/>
            <person name="Shiohata N."/>
            <person name="Sano S."/>
            <person name="Moriya S."/>
            <person name="Momiyama H."/>
            <person name="Satoh N."/>
            <person name="Takami S."/>
            <person name="Terashima Y."/>
            <person name="Suzuki O."/>
            <person name="Nakagawa S."/>
            <person name="Senoh A."/>
            <person name="Mizoguchi H."/>
            <person name="Goto Y."/>
            <person name="Shimizu F."/>
            <person name="Wakebe H."/>
            <person name="Hishigaki H."/>
            <person name="Watanabe T."/>
            <person name="Sugiyama A."/>
            <person name="Takemoto M."/>
            <person name="Kawakami B."/>
            <person name="Yamazaki M."/>
            <person name="Watanabe K."/>
            <person name="Kumagai A."/>
            <person name="Itakura S."/>
            <person name="Fukuzumi Y."/>
            <person name="Fujimori Y."/>
            <person name="Komiyama M."/>
            <person name="Tashiro H."/>
            <person name="Tanigami A."/>
            <person name="Fujiwara T."/>
            <person name="Ono T."/>
            <person name="Yamada K."/>
            <person name="Fujii Y."/>
            <person name="Ozaki K."/>
            <person name="Hirao M."/>
            <person name="Ohmori Y."/>
            <person name="Kawabata A."/>
            <person name="Hikiji T."/>
            <person name="Kobatake N."/>
            <person name="Inagaki H."/>
            <person name="Ikema Y."/>
            <person name="Okamoto S."/>
            <person name="Okitani R."/>
            <person name="Kawakami T."/>
            <person name="Noguchi S."/>
            <person name="Itoh T."/>
            <person name="Shigeta K."/>
            <person name="Senba T."/>
            <person name="Matsumura K."/>
            <person name="Nakajima Y."/>
            <person name="Mizuno T."/>
            <person name="Morinaga M."/>
            <person name="Sasaki M."/>
            <person name="Togashi T."/>
            <person name="Oyama M."/>
            <person name="Hata H."/>
            <person name="Watanabe M."/>
            <person name="Komatsu T."/>
            <person name="Mizushima-Sugano J."/>
            <person name="Satoh T."/>
            <person name="Shirai Y."/>
            <person name="Takahashi Y."/>
            <person name="Nakagawa K."/>
            <person name="Okumura K."/>
            <person name="Nagase T."/>
            <person name="Nomura N."/>
            <person name="Kikuchi H."/>
            <person name="Masuho Y."/>
            <person name="Yamashita R."/>
            <person name="Nakai K."/>
            <person name="Yada T."/>
            <person name="Nakamura Y."/>
            <person name="Ohara O."/>
            <person name="Isogai T."/>
            <person name="Sugano S."/>
        </authorList>
    </citation>
    <scope>NUCLEOTIDE SEQUENCE [LARGE SCALE MRNA] (ISOFORMS 1 AND 2)</scope>
    <source>
        <tissue>Brain</tissue>
    </source>
</reference>
<reference key="2">
    <citation type="journal article" date="2004" name="Nature">
        <title>The DNA sequence and biology of human chromosome 19.</title>
        <authorList>
            <person name="Grimwood J."/>
            <person name="Gordon L.A."/>
            <person name="Olsen A.S."/>
            <person name="Terry A."/>
            <person name="Schmutz J."/>
            <person name="Lamerdin J.E."/>
            <person name="Hellsten U."/>
            <person name="Goodstein D."/>
            <person name="Couronne O."/>
            <person name="Tran-Gyamfi M."/>
            <person name="Aerts A."/>
            <person name="Altherr M."/>
            <person name="Ashworth L."/>
            <person name="Bajorek E."/>
            <person name="Black S."/>
            <person name="Branscomb E."/>
            <person name="Caenepeel S."/>
            <person name="Carrano A.V."/>
            <person name="Caoile C."/>
            <person name="Chan Y.M."/>
            <person name="Christensen M."/>
            <person name="Cleland C.A."/>
            <person name="Copeland A."/>
            <person name="Dalin E."/>
            <person name="Dehal P."/>
            <person name="Denys M."/>
            <person name="Detter J.C."/>
            <person name="Escobar J."/>
            <person name="Flowers D."/>
            <person name="Fotopulos D."/>
            <person name="Garcia C."/>
            <person name="Georgescu A.M."/>
            <person name="Glavina T."/>
            <person name="Gomez M."/>
            <person name="Gonzales E."/>
            <person name="Groza M."/>
            <person name="Hammon N."/>
            <person name="Hawkins T."/>
            <person name="Haydu L."/>
            <person name="Ho I."/>
            <person name="Huang W."/>
            <person name="Israni S."/>
            <person name="Jett J."/>
            <person name="Kadner K."/>
            <person name="Kimball H."/>
            <person name="Kobayashi A."/>
            <person name="Larionov V."/>
            <person name="Leem S.-H."/>
            <person name="Lopez F."/>
            <person name="Lou Y."/>
            <person name="Lowry S."/>
            <person name="Malfatti S."/>
            <person name="Martinez D."/>
            <person name="McCready P.M."/>
            <person name="Medina C."/>
            <person name="Morgan J."/>
            <person name="Nelson K."/>
            <person name="Nolan M."/>
            <person name="Ovcharenko I."/>
            <person name="Pitluck S."/>
            <person name="Pollard M."/>
            <person name="Popkie A.P."/>
            <person name="Predki P."/>
            <person name="Quan G."/>
            <person name="Ramirez L."/>
            <person name="Rash S."/>
            <person name="Retterer J."/>
            <person name="Rodriguez A."/>
            <person name="Rogers S."/>
            <person name="Salamov A."/>
            <person name="Salazar A."/>
            <person name="She X."/>
            <person name="Smith D."/>
            <person name="Slezak T."/>
            <person name="Solovyev V."/>
            <person name="Thayer N."/>
            <person name="Tice H."/>
            <person name="Tsai M."/>
            <person name="Ustaszewska A."/>
            <person name="Vo N."/>
            <person name="Wagner M."/>
            <person name="Wheeler J."/>
            <person name="Wu K."/>
            <person name="Xie G."/>
            <person name="Yang J."/>
            <person name="Dubchak I."/>
            <person name="Furey T.S."/>
            <person name="DeJong P."/>
            <person name="Dickson M."/>
            <person name="Gordon D."/>
            <person name="Eichler E.E."/>
            <person name="Pennacchio L.A."/>
            <person name="Richardson P."/>
            <person name="Stubbs L."/>
            <person name="Rokhsar D.S."/>
            <person name="Myers R.M."/>
            <person name="Rubin E.M."/>
            <person name="Lucas S.M."/>
        </authorList>
    </citation>
    <scope>NUCLEOTIDE SEQUENCE [LARGE SCALE GENOMIC DNA]</scope>
</reference>
<reference key="3">
    <citation type="submission" date="2005-07" db="EMBL/GenBank/DDBJ databases">
        <authorList>
            <person name="Mural R.J."/>
            <person name="Istrail S."/>
            <person name="Sutton G.G."/>
            <person name="Florea L."/>
            <person name="Halpern A.L."/>
            <person name="Mobarry C.M."/>
            <person name="Lippert R."/>
            <person name="Walenz B."/>
            <person name="Shatkay H."/>
            <person name="Dew I."/>
            <person name="Miller J.R."/>
            <person name="Flanigan M.J."/>
            <person name="Edwards N.J."/>
            <person name="Bolanos R."/>
            <person name="Fasulo D."/>
            <person name="Halldorsson B.V."/>
            <person name="Hannenhalli S."/>
            <person name="Turner R."/>
            <person name="Yooseph S."/>
            <person name="Lu F."/>
            <person name="Nusskern D.R."/>
            <person name="Shue B.C."/>
            <person name="Zheng X.H."/>
            <person name="Zhong F."/>
            <person name="Delcher A.L."/>
            <person name="Huson D.H."/>
            <person name="Kravitz S.A."/>
            <person name="Mouchard L."/>
            <person name="Reinert K."/>
            <person name="Remington K.A."/>
            <person name="Clark A.G."/>
            <person name="Waterman M.S."/>
            <person name="Eichler E.E."/>
            <person name="Adams M.D."/>
            <person name="Hunkapiller M.W."/>
            <person name="Myers E.W."/>
            <person name="Venter J.C."/>
        </authorList>
    </citation>
    <scope>NUCLEOTIDE SEQUENCE [LARGE SCALE GENOMIC DNA]</scope>
</reference>
<reference key="4">
    <citation type="journal article" date="2004" name="Genome Res.">
        <title>The status, quality, and expansion of the NIH full-length cDNA project: the Mammalian Gene Collection (MGC).</title>
        <authorList>
            <consortium name="The MGC Project Team"/>
        </authorList>
    </citation>
    <scope>NUCLEOTIDE SEQUENCE [LARGE SCALE MRNA] (ISOFORM 1)</scope>
    <source>
        <tissue>Brain</tissue>
    </source>
</reference>